<dbReference type="EC" id="2.7.7.66" evidence="1"/>
<dbReference type="EMBL" id="CP000647">
    <property type="protein sequence ID" value="ABR76990.1"/>
    <property type="molecule type" value="Genomic_DNA"/>
</dbReference>
<dbReference type="RefSeq" id="WP_015958367.1">
    <property type="nucleotide sequence ID" value="NC_009648.1"/>
</dbReference>
<dbReference type="STRING" id="272620.KPN_01559"/>
<dbReference type="PaxDb" id="272620-KPN_01559"/>
<dbReference type="EnsemblBacteria" id="ABR76990">
    <property type="protein sequence ID" value="ABR76990"/>
    <property type="gene ID" value="KPN_01559"/>
</dbReference>
<dbReference type="KEGG" id="kpn:KPN_01559"/>
<dbReference type="HOGENOM" id="CLU_111981_0_0_6"/>
<dbReference type="Proteomes" id="UP000000265">
    <property type="component" value="Chromosome"/>
</dbReference>
<dbReference type="GO" id="GO:0016779">
    <property type="term" value="F:nucleotidyltransferase activity"/>
    <property type="evidence" value="ECO:0007669"/>
    <property type="project" value="UniProtKB-UniRule"/>
</dbReference>
<dbReference type="HAMAP" id="MF_00650">
    <property type="entry name" value="Malonate_MdcG"/>
    <property type="match status" value="1"/>
</dbReference>
<dbReference type="InterPro" id="IPR017557">
    <property type="entry name" value="Holo-ACP_synthase"/>
</dbReference>
<dbReference type="InterPro" id="IPR049180">
    <property type="entry name" value="MdcG_C"/>
</dbReference>
<dbReference type="InterPro" id="IPR048903">
    <property type="entry name" value="MdcG_N"/>
</dbReference>
<dbReference type="NCBIfam" id="TIGR03135">
    <property type="entry name" value="malonate_mdcG"/>
    <property type="match status" value="1"/>
</dbReference>
<dbReference type="NCBIfam" id="NF002332">
    <property type="entry name" value="PRK01293.1"/>
    <property type="match status" value="1"/>
</dbReference>
<dbReference type="Pfam" id="PF10620">
    <property type="entry name" value="MdcG"/>
    <property type="match status" value="1"/>
</dbReference>
<dbReference type="Pfam" id="PF20866">
    <property type="entry name" value="MdcG_N"/>
    <property type="match status" value="1"/>
</dbReference>
<evidence type="ECO:0000255" key="1">
    <source>
        <dbReference type="HAMAP-Rule" id="MF_00650"/>
    </source>
</evidence>
<gene>
    <name evidence="1" type="primary">mdcG</name>
    <name type="ordered locus">KPN78578_15290</name>
    <name type="ORF">KPN_01559</name>
</gene>
<reference key="1">
    <citation type="submission" date="2006-09" db="EMBL/GenBank/DDBJ databases">
        <authorList>
            <consortium name="The Klebsiella pneumonia Genome Sequencing Project"/>
            <person name="McClelland M."/>
            <person name="Sanderson E.K."/>
            <person name="Spieth J."/>
            <person name="Clifton W.S."/>
            <person name="Latreille P."/>
            <person name="Sabo A."/>
            <person name="Pepin K."/>
            <person name="Bhonagiri V."/>
            <person name="Porwollik S."/>
            <person name="Ali J."/>
            <person name="Wilson R.K."/>
        </authorList>
    </citation>
    <scope>NUCLEOTIDE SEQUENCE [LARGE SCALE GENOMIC DNA]</scope>
    <source>
        <strain>ATCC 700721 / MGH 78578</strain>
    </source>
</reference>
<comment type="function">
    <text evidence="1">Transfers 2'-(5-triphosphoribosyl)-3'-dephosphocoenzyme-A to the apo-[acyl-carrier-protein] of the malonate decarboxylase to yield holo-[acyl-carrier-protein].</text>
</comment>
<comment type="catalytic activity">
    <reaction evidence="1">
        <text>apo-[malonate decarboxylase ACP] + 2'-(5''-triphospho-alpha-D-ribosyl)-3'-dephospho-CoA = holo-[malonate decarboxylase ACP] + diphosphate</text>
        <dbReference type="Rhea" id="RHEA:42644"/>
        <dbReference type="Rhea" id="RHEA-COMP:10160"/>
        <dbReference type="Rhea" id="RHEA-COMP:10161"/>
        <dbReference type="ChEBI" id="CHEBI:29999"/>
        <dbReference type="ChEBI" id="CHEBI:33019"/>
        <dbReference type="ChEBI" id="CHEBI:61378"/>
        <dbReference type="ChEBI" id="CHEBI:82683"/>
        <dbReference type="EC" id="2.7.7.66"/>
    </reaction>
</comment>
<comment type="similarity">
    <text evidence="1">Belongs to the MdcG family.</text>
</comment>
<accession>A6T8R9</accession>
<keyword id="KW-0548">Nucleotidyltransferase</keyword>
<keyword id="KW-0808">Transferase</keyword>
<feature type="chain" id="PRO_1000061471" description="Phosphoribosyl-dephospho-CoA transferase">
    <location>
        <begin position="1"/>
        <end position="205"/>
    </location>
</feature>
<feature type="active site" evidence="1">
    <location>
        <position position="134"/>
    </location>
</feature>
<feature type="active site" evidence="1">
    <location>
        <position position="136"/>
    </location>
</feature>
<proteinExistence type="inferred from homology"/>
<organism>
    <name type="scientific">Klebsiella pneumoniae subsp. pneumoniae (strain ATCC 700721 / MGH 78578)</name>
    <dbReference type="NCBI Taxonomy" id="272620"/>
    <lineage>
        <taxon>Bacteria</taxon>
        <taxon>Pseudomonadati</taxon>
        <taxon>Pseudomonadota</taxon>
        <taxon>Gammaproteobacteria</taxon>
        <taxon>Enterobacterales</taxon>
        <taxon>Enterobacteriaceae</taxon>
        <taxon>Klebsiella/Raoultella group</taxon>
        <taxon>Klebsiella</taxon>
        <taxon>Klebsiella pneumoniae complex</taxon>
    </lineage>
</organism>
<sequence length="205" mass="23004">MSATPRPHDLVWLNHASALEDIAEPWVAQQWRAALPVVVRRDVDDQARVPVGVRGMKREQRAAGWVQARNIVRSVTPEMLVDREVLLHSPFVSQPPVQGAIALTLHRWPWGWGVTGSTGYALATEIPVLHAASDLDLLIRASQPLDREALLEWQTRVAQLPCRADTQVETPYGAFALNEWLRDGRALLKTSRGARLTATPWHREE</sequence>
<name>MDCG_KLEP7</name>
<protein>
    <recommendedName>
        <fullName evidence="1">Phosphoribosyl-dephospho-CoA transferase</fullName>
        <ecNumber evidence="1">2.7.7.66</ecNumber>
    </recommendedName>
    <alternativeName>
        <fullName evidence="1">Malonate decarboxylase holo-[acyl-carrier-protein] synthase</fullName>
        <shortName evidence="1">Holo-ACP synthase</shortName>
    </alternativeName>
</protein>